<keyword id="KW-0010">Activator</keyword>
<keyword id="KW-0025">Alternative splicing</keyword>
<keyword id="KW-0963">Cytoplasm</keyword>
<keyword id="KW-0238">DNA-binding</keyword>
<keyword id="KW-0488">Methylation</keyword>
<keyword id="KW-0539">Nucleus</keyword>
<keyword id="KW-0597">Phosphoprotein</keyword>
<keyword id="KW-1267">Proteomics identification</keyword>
<keyword id="KW-1185">Reference proteome</keyword>
<keyword id="KW-0804">Transcription</keyword>
<keyword id="KW-0805">Transcription regulation</keyword>
<organism>
    <name type="scientific">Homo sapiens</name>
    <name type="common">Human</name>
    <dbReference type="NCBI Taxonomy" id="9606"/>
    <lineage>
        <taxon>Eukaryota</taxon>
        <taxon>Metazoa</taxon>
        <taxon>Chordata</taxon>
        <taxon>Craniata</taxon>
        <taxon>Vertebrata</taxon>
        <taxon>Euteleostomi</taxon>
        <taxon>Mammalia</taxon>
        <taxon>Eutheria</taxon>
        <taxon>Euarchontoglires</taxon>
        <taxon>Primates</taxon>
        <taxon>Haplorrhini</taxon>
        <taxon>Catarrhini</taxon>
        <taxon>Hominidae</taxon>
        <taxon>Homo</taxon>
    </lineage>
</organism>
<reference key="1">
    <citation type="journal article" date="2003" name="Blood">
        <title>Vasculin, a novel vascular protein differentially expressed in human atherogenesis.</title>
        <authorList>
            <person name="Bijnens A.P.J.J."/>
            <person name="Gils A."/>
            <person name="Jutten B."/>
            <person name="Faber B.C.G."/>
            <person name="Heeneman S."/>
            <person name="Kitslaar P.J.E.H.M."/>
            <person name="Tordoir J.H.M."/>
            <person name="de Vries C.J.M."/>
            <person name="Kroon A.A."/>
            <person name="Daemen M.J.A.P."/>
            <person name="Cleutjens K.B.J.M."/>
        </authorList>
    </citation>
    <scope>NUCLEOTIDE SEQUENCE [MRNA] (ISOFORM 1)</scope>
    <scope>ALTERNATIVE SPLICING (ISOFORM 4)</scope>
    <scope>SUBCELLULAR LOCATION</scope>
    <scope>TISSUE SPECIFICITY</scope>
    <source>
        <tissue>Artery</tissue>
    </source>
</reference>
<reference key="2">
    <citation type="journal article" date="2001" name="Genome Res.">
        <title>Towards a catalog of human genes and proteins: sequencing and analysis of 500 novel complete protein coding human cDNAs.</title>
        <authorList>
            <person name="Wiemann S."/>
            <person name="Weil B."/>
            <person name="Wellenreuther R."/>
            <person name="Gassenhuber J."/>
            <person name="Glassl S."/>
            <person name="Ansorge W."/>
            <person name="Boecher M."/>
            <person name="Bloecker H."/>
            <person name="Bauersachs S."/>
            <person name="Blum H."/>
            <person name="Lauber J."/>
            <person name="Duesterhoeft A."/>
            <person name="Beyer A."/>
            <person name="Koehrer K."/>
            <person name="Strack N."/>
            <person name="Mewes H.-W."/>
            <person name="Ottenwaelder B."/>
            <person name="Obermaier B."/>
            <person name="Tampe J."/>
            <person name="Heubner D."/>
            <person name="Wambutt R."/>
            <person name="Korn B."/>
            <person name="Klein M."/>
            <person name="Poustka A."/>
        </authorList>
    </citation>
    <scope>NUCLEOTIDE SEQUENCE [LARGE SCALE MRNA] (ISOFORM 2)</scope>
    <source>
        <tissue>Testis</tissue>
    </source>
</reference>
<reference key="3">
    <citation type="journal article" date="2007" name="BMC Genomics">
        <title>The full-ORF clone resource of the German cDNA consortium.</title>
        <authorList>
            <person name="Bechtel S."/>
            <person name="Rosenfelder H."/>
            <person name="Duda A."/>
            <person name="Schmidt C.P."/>
            <person name="Ernst U."/>
            <person name="Wellenreuther R."/>
            <person name="Mehrle A."/>
            <person name="Schuster C."/>
            <person name="Bahr A."/>
            <person name="Bloecker H."/>
            <person name="Heubner D."/>
            <person name="Hoerlein A."/>
            <person name="Michel G."/>
            <person name="Wedler H."/>
            <person name="Koehrer K."/>
            <person name="Ottenwaelder B."/>
            <person name="Poustka A."/>
            <person name="Wiemann S."/>
            <person name="Schupp I."/>
        </authorList>
    </citation>
    <scope>NUCLEOTIDE SEQUENCE [LARGE SCALE MRNA] (ISOFORM 4)</scope>
    <source>
        <tissue>Amygdala</tissue>
    </source>
</reference>
<reference key="4">
    <citation type="journal article" date="2004" name="Nature">
        <title>The DNA sequence and comparative analysis of human chromosome 5.</title>
        <authorList>
            <person name="Schmutz J."/>
            <person name="Martin J."/>
            <person name="Terry A."/>
            <person name="Couronne O."/>
            <person name="Grimwood J."/>
            <person name="Lowry S."/>
            <person name="Gordon L.A."/>
            <person name="Scott D."/>
            <person name="Xie G."/>
            <person name="Huang W."/>
            <person name="Hellsten U."/>
            <person name="Tran-Gyamfi M."/>
            <person name="She X."/>
            <person name="Prabhakar S."/>
            <person name="Aerts A."/>
            <person name="Altherr M."/>
            <person name="Bajorek E."/>
            <person name="Black S."/>
            <person name="Branscomb E."/>
            <person name="Caoile C."/>
            <person name="Challacombe J.F."/>
            <person name="Chan Y.M."/>
            <person name="Denys M."/>
            <person name="Detter J.C."/>
            <person name="Escobar J."/>
            <person name="Flowers D."/>
            <person name="Fotopulos D."/>
            <person name="Glavina T."/>
            <person name="Gomez M."/>
            <person name="Gonzales E."/>
            <person name="Goodstein D."/>
            <person name="Grigoriev I."/>
            <person name="Groza M."/>
            <person name="Hammon N."/>
            <person name="Hawkins T."/>
            <person name="Haydu L."/>
            <person name="Israni S."/>
            <person name="Jett J."/>
            <person name="Kadner K."/>
            <person name="Kimball H."/>
            <person name="Kobayashi A."/>
            <person name="Lopez F."/>
            <person name="Lou Y."/>
            <person name="Martinez D."/>
            <person name="Medina C."/>
            <person name="Morgan J."/>
            <person name="Nandkeshwar R."/>
            <person name="Noonan J.P."/>
            <person name="Pitluck S."/>
            <person name="Pollard M."/>
            <person name="Predki P."/>
            <person name="Priest J."/>
            <person name="Ramirez L."/>
            <person name="Retterer J."/>
            <person name="Rodriguez A."/>
            <person name="Rogers S."/>
            <person name="Salamov A."/>
            <person name="Salazar A."/>
            <person name="Thayer N."/>
            <person name="Tice H."/>
            <person name="Tsai M."/>
            <person name="Ustaszewska A."/>
            <person name="Vo N."/>
            <person name="Wheeler J."/>
            <person name="Wu K."/>
            <person name="Yang J."/>
            <person name="Dickson M."/>
            <person name="Cheng J.-F."/>
            <person name="Eichler E.E."/>
            <person name="Olsen A."/>
            <person name="Pennacchio L.A."/>
            <person name="Rokhsar D.S."/>
            <person name="Richardson P."/>
            <person name="Lucas S.M."/>
            <person name="Myers R.M."/>
            <person name="Rubin E.M."/>
        </authorList>
    </citation>
    <scope>NUCLEOTIDE SEQUENCE [LARGE SCALE GENOMIC DNA]</scope>
</reference>
<reference key="5">
    <citation type="submission" date="2005-07" db="EMBL/GenBank/DDBJ databases">
        <authorList>
            <person name="Mural R.J."/>
            <person name="Istrail S."/>
            <person name="Sutton G.G."/>
            <person name="Florea L."/>
            <person name="Halpern A.L."/>
            <person name="Mobarry C.M."/>
            <person name="Lippert R."/>
            <person name="Walenz B."/>
            <person name="Shatkay H."/>
            <person name="Dew I."/>
            <person name="Miller J.R."/>
            <person name="Flanigan M.J."/>
            <person name="Edwards N.J."/>
            <person name="Bolanos R."/>
            <person name="Fasulo D."/>
            <person name="Halldorsson B.V."/>
            <person name="Hannenhalli S."/>
            <person name="Turner R."/>
            <person name="Yooseph S."/>
            <person name="Lu F."/>
            <person name="Nusskern D.R."/>
            <person name="Shue B.C."/>
            <person name="Zheng X.H."/>
            <person name="Zhong F."/>
            <person name="Delcher A.L."/>
            <person name="Huson D.H."/>
            <person name="Kravitz S.A."/>
            <person name="Mouchard L."/>
            <person name="Reinert K."/>
            <person name="Remington K.A."/>
            <person name="Clark A.G."/>
            <person name="Waterman M.S."/>
            <person name="Eichler E.E."/>
            <person name="Adams M.D."/>
            <person name="Hunkapiller M.W."/>
            <person name="Myers E.W."/>
            <person name="Venter J.C."/>
        </authorList>
    </citation>
    <scope>NUCLEOTIDE SEQUENCE [LARGE SCALE GENOMIC DNA]</scope>
</reference>
<reference key="6">
    <citation type="journal article" date="2004" name="Genome Res.">
        <title>The status, quality, and expansion of the NIH full-length cDNA project: the Mammalian Gene Collection (MGC).</title>
        <authorList>
            <consortium name="The MGC Project Team"/>
        </authorList>
    </citation>
    <scope>NUCLEOTIDE SEQUENCE [LARGE SCALE MRNA] (ISOFORMS 1 AND 3)</scope>
    <source>
        <tissue>Retinoblastoma</tissue>
    </source>
</reference>
<reference key="7">
    <citation type="journal article" date="2004" name="Nat. Genet.">
        <title>Complete sequencing and characterization of 21,243 full-length human cDNAs.</title>
        <authorList>
            <person name="Ota T."/>
            <person name="Suzuki Y."/>
            <person name="Nishikawa T."/>
            <person name="Otsuki T."/>
            <person name="Sugiyama T."/>
            <person name="Irie R."/>
            <person name="Wakamatsu A."/>
            <person name="Hayashi K."/>
            <person name="Sato H."/>
            <person name="Nagai K."/>
            <person name="Kimura K."/>
            <person name="Makita H."/>
            <person name="Sekine M."/>
            <person name="Obayashi M."/>
            <person name="Nishi T."/>
            <person name="Shibahara T."/>
            <person name="Tanaka T."/>
            <person name="Ishii S."/>
            <person name="Yamamoto J."/>
            <person name="Saito K."/>
            <person name="Kawai Y."/>
            <person name="Isono Y."/>
            <person name="Nakamura Y."/>
            <person name="Nagahari K."/>
            <person name="Murakami K."/>
            <person name="Yasuda T."/>
            <person name="Iwayanagi T."/>
            <person name="Wagatsuma M."/>
            <person name="Shiratori A."/>
            <person name="Sudo H."/>
            <person name="Hosoiri T."/>
            <person name="Kaku Y."/>
            <person name="Kodaira H."/>
            <person name="Kondo H."/>
            <person name="Sugawara M."/>
            <person name="Takahashi M."/>
            <person name="Kanda K."/>
            <person name="Yokoi T."/>
            <person name="Furuya T."/>
            <person name="Kikkawa E."/>
            <person name="Omura Y."/>
            <person name="Abe K."/>
            <person name="Kamihara K."/>
            <person name="Katsuta N."/>
            <person name="Sato K."/>
            <person name="Tanikawa M."/>
            <person name="Yamazaki M."/>
            <person name="Ninomiya K."/>
            <person name="Ishibashi T."/>
            <person name="Yamashita H."/>
            <person name="Murakawa K."/>
            <person name="Fujimori K."/>
            <person name="Tanai H."/>
            <person name="Kimata M."/>
            <person name="Watanabe M."/>
            <person name="Hiraoka S."/>
            <person name="Chiba Y."/>
            <person name="Ishida S."/>
            <person name="Ono Y."/>
            <person name="Takiguchi S."/>
            <person name="Watanabe S."/>
            <person name="Yosida M."/>
            <person name="Hotuta T."/>
            <person name="Kusano J."/>
            <person name="Kanehori K."/>
            <person name="Takahashi-Fujii A."/>
            <person name="Hara H."/>
            <person name="Tanase T.-O."/>
            <person name="Nomura Y."/>
            <person name="Togiya S."/>
            <person name="Komai F."/>
            <person name="Hara R."/>
            <person name="Takeuchi K."/>
            <person name="Arita M."/>
            <person name="Imose N."/>
            <person name="Musashino K."/>
            <person name="Yuuki H."/>
            <person name="Oshima A."/>
            <person name="Sasaki N."/>
            <person name="Aotsuka S."/>
            <person name="Yoshikawa Y."/>
            <person name="Matsunawa H."/>
            <person name="Ichihara T."/>
            <person name="Shiohata N."/>
            <person name="Sano S."/>
            <person name="Moriya S."/>
            <person name="Momiyama H."/>
            <person name="Satoh N."/>
            <person name="Takami S."/>
            <person name="Terashima Y."/>
            <person name="Suzuki O."/>
            <person name="Nakagawa S."/>
            <person name="Senoh A."/>
            <person name="Mizoguchi H."/>
            <person name="Goto Y."/>
            <person name="Shimizu F."/>
            <person name="Wakebe H."/>
            <person name="Hishigaki H."/>
            <person name="Watanabe T."/>
            <person name="Sugiyama A."/>
            <person name="Takemoto M."/>
            <person name="Kawakami B."/>
            <person name="Yamazaki M."/>
            <person name="Watanabe K."/>
            <person name="Kumagai A."/>
            <person name="Itakura S."/>
            <person name="Fukuzumi Y."/>
            <person name="Fujimori Y."/>
            <person name="Komiyama M."/>
            <person name="Tashiro H."/>
            <person name="Tanigami A."/>
            <person name="Fujiwara T."/>
            <person name="Ono T."/>
            <person name="Yamada K."/>
            <person name="Fujii Y."/>
            <person name="Ozaki K."/>
            <person name="Hirao M."/>
            <person name="Ohmori Y."/>
            <person name="Kawabata A."/>
            <person name="Hikiji T."/>
            <person name="Kobatake N."/>
            <person name="Inagaki H."/>
            <person name="Ikema Y."/>
            <person name="Okamoto S."/>
            <person name="Okitani R."/>
            <person name="Kawakami T."/>
            <person name="Noguchi S."/>
            <person name="Itoh T."/>
            <person name="Shigeta K."/>
            <person name="Senba T."/>
            <person name="Matsumura K."/>
            <person name="Nakajima Y."/>
            <person name="Mizuno T."/>
            <person name="Morinaga M."/>
            <person name="Sasaki M."/>
            <person name="Togashi T."/>
            <person name="Oyama M."/>
            <person name="Hata H."/>
            <person name="Watanabe M."/>
            <person name="Komatsu T."/>
            <person name="Mizushima-Sugano J."/>
            <person name="Satoh T."/>
            <person name="Shirai Y."/>
            <person name="Takahashi Y."/>
            <person name="Nakagawa K."/>
            <person name="Okumura K."/>
            <person name="Nagase T."/>
            <person name="Nomura N."/>
            <person name="Kikuchi H."/>
            <person name="Masuho Y."/>
            <person name="Yamashita R."/>
            <person name="Nakai K."/>
            <person name="Yada T."/>
            <person name="Nakamura Y."/>
            <person name="Ohara O."/>
            <person name="Isogai T."/>
            <person name="Sugano S."/>
        </authorList>
    </citation>
    <scope>NUCLEOTIDE SEQUENCE [LARGE SCALE MRNA] OF 164-473 (ISOFORM 1)</scope>
    <source>
        <tissue>Smooth muscle</tissue>
    </source>
</reference>
<reference key="8">
    <citation type="journal article" date="2003" name="Mol. Cell. Biol.">
        <title>The murine G+C-rich promoter binding protein mGPBP is required for promoter-specific transcription.</title>
        <authorList>
            <person name="Hsu L.-C."/>
            <person name="Liu S."/>
            <person name="Abedinpour F."/>
            <person name="Beech R.D."/>
            <person name="Lahti J.M."/>
            <person name="Kidd V.J."/>
            <person name="Greenspan J.A."/>
            <person name="Yeung C.-Y."/>
        </authorList>
    </citation>
    <scope>SUBCELLULAR LOCATION</scope>
    <scope>TISSUE SPECIFICITY</scope>
</reference>
<reference key="9">
    <citation type="journal article" date="2011" name="Sci. Signal.">
        <title>System-wide temporal characterization of the proteome and phosphoproteome of human embryonic stem cell differentiation.</title>
        <authorList>
            <person name="Rigbolt K.T."/>
            <person name="Prokhorova T.A."/>
            <person name="Akimov V."/>
            <person name="Henningsen J."/>
            <person name="Johansen P.T."/>
            <person name="Kratchmarova I."/>
            <person name="Kassem M."/>
            <person name="Mann M."/>
            <person name="Olsen J.V."/>
            <person name="Blagoev B."/>
        </authorList>
    </citation>
    <scope>IDENTIFICATION BY MASS SPECTROMETRY [LARGE SCALE ANALYSIS]</scope>
</reference>
<reference key="10">
    <citation type="journal article" date="2013" name="J. Proteome Res.">
        <title>Toward a comprehensive characterization of a human cancer cell phosphoproteome.</title>
        <authorList>
            <person name="Zhou H."/>
            <person name="Di Palma S."/>
            <person name="Preisinger C."/>
            <person name="Peng M."/>
            <person name="Polat A.N."/>
            <person name="Heck A.J."/>
            <person name="Mohammed S."/>
        </authorList>
    </citation>
    <scope>PHOSPHORYLATION [LARGE SCALE ANALYSIS] AT SER-49; SER-322 AND SER-381</scope>
    <scope>IDENTIFICATION BY MASS SPECTROMETRY [LARGE SCALE ANALYSIS]</scope>
    <source>
        <tissue>Cervix carcinoma</tissue>
        <tissue>Erythroleukemia</tissue>
    </source>
</reference>
<reference key="11">
    <citation type="journal article" date="2014" name="Mol. Cell. Proteomics">
        <title>Immunoaffinity enrichment and mass spectrometry analysis of protein methylation.</title>
        <authorList>
            <person name="Guo A."/>
            <person name="Gu H."/>
            <person name="Zhou J."/>
            <person name="Mulhern D."/>
            <person name="Wang Y."/>
            <person name="Lee K.A."/>
            <person name="Yang V."/>
            <person name="Aguiar M."/>
            <person name="Kornhauser J."/>
            <person name="Jia X."/>
            <person name="Ren J."/>
            <person name="Beausoleil S.A."/>
            <person name="Silva J.C."/>
            <person name="Vemulapalli V."/>
            <person name="Bedford M.T."/>
            <person name="Comb M.J."/>
        </authorList>
    </citation>
    <scope>METHYLATION [LARGE SCALE ANALYSIS] AT ARG-87</scope>
    <scope>IDENTIFICATION BY MASS SPECTROMETRY [LARGE SCALE ANALYSIS]</scope>
    <source>
        <tissue>Colon carcinoma</tissue>
    </source>
</reference>
<sequence>MAQHDFAPAWLNFPTPPSSTKSSLNFEKHSENFAWTENRYDVNRRRHNSSDGFDSAIGRPNGGNFGRKEKNGWRTHGRNGTENINHRGGYHGGSSRSRSSIFHAGKSQGLHENNIPDNETGRKEDKRERKQFEAEDFPSLNPEYEREPNHNKSLAAGVWEYPPNPKSRAPRMLVIKKGNTKDLQLSGFPVVGNLPSQPVKNGTGPSVYKGLVPKPAAPPTKPTQWKSQTKENKVGTSFPHESTFGVGNFNAFKSTAKNFSPSTNSVKECNRSNSSSPVDKLNQQPRLTKLTRMRTDKKSEFLKALKRDRVEEEHEDESRAGSEKDDDSFNLHNSNSTHQERDINRNFDENEIPQENGNASVISQQIIRSSTFPQTDVLSSSLEAEHRLLKEMGWQEDSENDETCAPLTEDEMREFQVISEQLQKNGLRKNGILKNGLICDFKFGPWKNSTFKPTTENDDTETSSSDTSDDDDV</sequence>
<protein>
    <recommendedName>
        <fullName>Vasculin</fullName>
    </recommendedName>
    <alternativeName>
        <fullName>GC-rich promoter-binding protein 1</fullName>
    </alternativeName>
    <alternativeName>
        <fullName>Vascular wall-linked protein</fullName>
    </alternativeName>
</protein>
<accession>Q86WP2</accession>
<accession>A6NKW3</accession>
<accession>Q6NSH6</accession>
<accession>Q9H0D4</accession>
<accession>Q9H785</accession>
<accession>Q9NSN4</accession>
<feature type="chain" id="PRO_0000324110" description="Vasculin">
    <location>
        <begin position="1"/>
        <end position="473"/>
    </location>
</feature>
<feature type="region of interest" description="Disordered" evidence="3">
    <location>
        <begin position="1"/>
        <end position="25"/>
    </location>
</feature>
<feature type="region of interest" description="Disordered" evidence="3">
    <location>
        <begin position="46"/>
        <end position="149"/>
    </location>
</feature>
<feature type="region of interest" description="Disordered" evidence="3">
    <location>
        <begin position="191"/>
        <end position="342"/>
    </location>
</feature>
<feature type="region of interest" description="Disordered" evidence="3">
    <location>
        <begin position="444"/>
        <end position="473"/>
    </location>
</feature>
<feature type="compositionally biased region" description="Basic and acidic residues" evidence="3">
    <location>
        <begin position="119"/>
        <end position="133"/>
    </location>
</feature>
<feature type="compositionally biased region" description="Polar residues" evidence="3">
    <location>
        <begin position="194"/>
        <end position="204"/>
    </location>
</feature>
<feature type="compositionally biased region" description="Polar residues" evidence="3">
    <location>
        <begin position="251"/>
        <end position="286"/>
    </location>
</feature>
<feature type="compositionally biased region" description="Basic and acidic residues" evidence="3">
    <location>
        <begin position="293"/>
        <end position="329"/>
    </location>
</feature>
<feature type="compositionally biased region" description="Acidic residues" evidence="3">
    <location>
        <begin position="456"/>
        <end position="473"/>
    </location>
</feature>
<feature type="modified residue" description="Phosphoserine" evidence="10">
    <location>
        <position position="49"/>
    </location>
</feature>
<feature type="modified residue" description="Omega-N-methylarginine" evidence="11">
    <location>
        <position position="87"/>
    </location>
</feature>
<feature type="modified residue" description="Phosphoserine" evidence="2">
    <location>
        <position position="274"/>
    </location>
</feature>
<feature type="modified residue" description="Phosphoserine" evidence="2">
    <location>
        <position position="276"/>
    </location>
</feature>
<feature type="modified residue" description="Phosphoserine" evidence="10">
    <location>
        <position position="322"/>
    </location>
</feature>
<feature type="modified residue" description="Phosphoserine" evidence="10">
    <location>
        <position position="381"/>
    </location>
</feature>
<feature type="splice variant" id="VSP_032135" description="In isoform 4." evidence="8">
    <location>
        <begin position="1"/>
        <end position="171"/>
    </location>
</feature>
<feature type="splice variant" id="VSP_032136" description="In isoform 2 and isoform 3." evidence="6 7">
    <original>T</original>
    <variation>TKVLTSSL</variation>
    <location>
        <position position="20"/>
    </location>
</feature>
<feature type="splice variant" id="VSP_032137" description="In isoform 3." evidence="7">
    <location>
        <begin position="269"/>
        <end position="283"/>
    </location>
</feature>
<feature type="sequence variant" id="VAR_039654" description="In dbSNP:rs1862171.">
    <original>R</original>
    <variation>G</variation>
    <location>
        <position position="122"/>
    </location>
</feature>
<feature type="sequence conflict" description="In Ref. 6; AAH70132." evidence="9" ref="6">
    <original>R</original>
    <variation>G</variation>
    <location>
        <position position="127"/>
    </location>
</feature>
<gene>
    <name type="primary">GPBP1</name>
    <name type="synonym">GPBP</name>
    <name type="synonym">SSH6</name>
</gene>
<evidence type="ECO:0000250" key="1"/>
<evidence type="ECO:0000250" key="2">
    <source>
        <dbReference type="UniProtKB" id="Q6NXH3"/>
    </source>
</evidence>
<evidence type="ECO:0000256" key="3">
    <source>
        <dbReference type="SAM" id="MobiDB-lite"/>
    </source>
</evidence>
<evidence type="ECO:0000269" key="4">
    <source>
    </source>
</evidence>
<evidence type="ECO:0000269" key="5">
    <source>
    </source>
</evidence>
<evidence type="ECO:0000303" key="6">
    <source>
    </source>
</evidence>
<evidence type="ECO:0000303" key="7">
    <source>
    </source>
</evidence>
<evidence type="ECO:0000303" key="8">
    <source>
    </source>
</evidence>
<evidence type="ECO:0000305" key="9"/>
<evidence type="ECO:0007744" key="10">
    <source>
    </source>
</evidence>
<evidence type="ECO:0007744" key="11">
    <source>
    </source>
</evidence>
<comment type="function">
    <text evidence="2">Functions as a GC-rich promoter-specific transactivating transcription factor.</text>
</comment>
<comment type="subunit">
    <text evidence="1">Interacts with GTF2B, GTF2F2, RNA polymerase II and TBP.</text>
</comment>
<comment type="interaction">
    <interactant intactId="EBI-2349758">
        <id>Q86WP2</id>
    </interactant>
    <interactant intactId="EBI-10961624">
        <id>Q2TAC2-2</id>
        <label>CCDC57</label>
    </interactant>
    <organismsDiffer>false</organismsDiffer>
    <experiments>3</experiments>
</comment>
<comment type="interaction">
    <interactant intactId="EBI-2349758">
        <id>Q86WP2</id>
    </interactant>
    <interactant intactId="EBI-719941">
        <id>Q3B820</id>
        <label>FAM161A</label>
    </interactant>
    <organismsDiffer>false</organismsDiffer>
    <experiments>3</experiments>
</comment>
<comment type="interaction">
    <interactant intactId="EBI-2349758">
        <id>Q86WP2</id>
    </interactant>
    <interactant intactId="EBI-744935">
        <id>Q9BVV2</id>
        <label>FNDC11</label>
    </interactant>
    <organismsDiffer>false</organismsDiffer>
    <experiments>11</experiments>
</comment>
<comment type="interaction">
    <interactant intactId="EBI-2349758">
        <id>Q86WP2</id>
    </interactant>
    <interactant intactId="EBI-7116203">
        <id>O75031</id>
        <label>HSF2BP</label>
    </interactant>
    <organismsDiffer>false</organismsDiffer>
    <experiments>3</experiments>
</comment>
<comment type="interaction">
    <interactant intactId="EBI-2349758">
        <id>Q86WP2</id>
    </interactant>
    <interactant intactId="EBI-348259">
        <id>Q96EZ8</id>
        <label>MCRS1</label>
    </interactant>
    <organismsDiffer>false</organismsDiffer>
    <experiments>5</experiments>
</comment>
<comment type="interaction">
    <interactant intactId="EBI-2349758">
        <id>Q86WP2</id>
    </interactant>
    <interactant intactId="EBI-399257">
        <id>Q15014</id>
        <label>MORF4L2</label>
    </interactant>
    <organismsDiffer>false</organismsDiffer>
    <experiments>3</experiments>
</comment>
<comment type="interaction">
    <interactant intactId="EBI-2349758">
        <id>Q86WP2</id>
    </interactant>
    <interactant intactId="EBI-398874">
        <id>Q9UBU9</id>
        <label>NXF1</label>
    </interactant>
    <organismsDiffer>false</organismsDiffer>
    <experiments>3</experiments>
</comment>
<comment type="interaction">
    <interactant intactId="EBI-2349758">
        <id>Q86WP2</id>
    </interactant>
    <interactant intactId="EBI-742388">
        <id>Q9H8W4</id>
        <label>PLEKHF2</label>
    </interactant>
    <organismsDiffer>false</organismsDiffer>
    <experiments>3</experiments>
</comment>
<comment type="interaction">
    <interactant intactId="EBI-2349758">
        <id>Q86WP2</id>
    </interactant>
    <interactant intactId="EBI-2798416">
        <id>Q99633</id>
        <label>PRPF18</label>
    </interactant>
    <organismsDiffer>false</organismsDiffer>
    <experiments>3</experiments>
</comment>
<comment type="interaction">
    <interactant intactId="EBI-2349758">
        <id>Q86WP2</id>
    </interactant>
    <interactant intactId="EBI-372273">
        <id>P20618</id>
        <label>PSMB1</label>
    </interactant>
    <organismsDiffer>false</organismsDiffer>
    <experiments>3</experiments>
</comment>
<comment type="interaction">
    <interactant intactId="EBI-2349758">
        <id>Q86WP2</id>
    </interactant>
    <interactant intactId="EBI-347462">
        <id>P47897</id>
        <label>QARS1</label>
    </interactant>
    <organismsDiffer>false</organismsDiffer>
    <experiments>3</experiments>
</comment>
<comment type="interaction">
    <interactant intactId="EBI-2349758">
        <id>Q86WP2</id>
    </interactant>
    <interactant intactId="EBI-296739">
        <id>P63244</id>
        <label>RACK1</label>
    </interactant>
    <organismsDiffer>false</organismsDiffer>
    <experiments>3</experiments>
</comment>
<comment type="interaction">
    <interactant intactId="EBI-2349758">
        <id>Q86WP2</id>
    </interactant>
    <interactant intactId="EBI-26359852">
        <id>Q5ZXN6</id>
        <label>ankX</label>
    </interactant>
    <organismsDiffer>true</organismsDiffer>
    <experiments>2</experiments>
</comment>
<comment type="interaction">
    <interactant intactId="EBI-10300058">
        <id>Q86WP2-4</id>
    </interactant>
    <interactant intactId="EBI-744935">
        <id>Q9BVV2</id>
        <label>FNDC11</label>
    </interactant>
    <organismsDiffer>false</organismsDiffer>
    <experiments>3</experiments>
</comment>
<comment type="subcellular location">
    <subcellularLocation>
        <location evidence="5">Nucleus</location>
    </subcellularLocation>
    <subcellularLocation>
        <location evidence="4">Cytoplasm</location>
    </subcellularLocation>
    <text evidence="4">According to PubMed:12842993, it localizes to the cytoplasm.</text>
</comment>
<comment type="alternative products">
    <event type="alternative splicing"/>
    <isoform>
        <id>Q86WP2-1</id>
        <name>1</name>
        <sequence type="displayed"/>
    </isoform>
    <isoform>
        <id>Q86WP2-2</id>
        <name>2</name>
        <sequence type="described" ref="VSP_032136"/>
    </isoform>
    <isoform>
        <id>Q86WP2-3</id>
        <name>3</name>
        <sequence type="described" ref="VSP_032136 VSP_032137"/>
    </isoform>
    <isoform>
        <id>Q86WP2-4</id>
        <name>4</name>
        <sequence type="described" ref="VSP_032135"/>
    </isoform>
</comment>
<comment type="tissue specificity">
    <text evidence="4 5">Widely expressed. Some isoforms may be specifically expressed in veins and arteries (at protein level). Isoform 4 is widely expressed. Isoform 1, isoform 2 and isoform 3 may be specifically expressed in vascular smooth muscle cells.</text>
</comment>
<comment type="similarity">
    <text evidence="9">Belongs to the vasculin family.</text>
</comment>
<comment type="sequence caution" evidence="9">
    <conflict type="erroneous initiation">
        <sequence resource="EMBL-CDS" id="AAH00267"/>
    </conflict>
</comment>
<comment type="sequence caution" evidence="9">
    <conflict type="miscellaneous discrepancy">
        <sequence resource="EMBL-CDS" id="AAH70132"/>
    </conflict>
    <text>Contaminating sequence. Sequence of unknown origin in the N-terminal part.</text>
</comment>
<comment type="sequence caution" evidence="9">
    <conflict type="frameshift">
        <sequence resource="EMBL-CDS" id="BAB15013"/>
    </conflict>
</comment>
<proteinExistence type="evidence at protein level"/>
<dbReference type="EMBL" id="AY226828">
    <property type="protein sequence ID" value="AAO34124.1"/>
    <property type="molecule type" value="mRNA"/>
</dbReference>
<dbReference type="EMBL" id="AL136844">
    <property type="protein sequence ID" value="CAB66778.1"/>
    <property type="molecule type" value="mRNA"/>
</dbReference>
<dbReference type="EMBL" id="AL161991">
    <property type="protein sequence ID" value="CAB82324.2"/>
    <property type="molecule type" value="mRNA"/>
</dbReference>
<dbReference type="EMBL" id="AC034244">
    <property type="status" value="NOT_ANNOTATED_CDS"/>
    <property type="molecule type" value="Genomic_DNA"/>
</dbReference>
<dbReference type="EMBL" id="CH471123">
    <property type="protein sequence ID" value="EAW54965.1"/>
    <property type="molecule type" value="Genomic_DNA"/>
</dbReference>
<dbReference type="EMBL" id="CH471123">
    <property type="protein sequence ID" value="EAW54966.1"/>
    <property type="molecule type" value="Genomic_DNA"/>
</dbReference>
<dbReference type="EMBL" id="BC000267">
    <property type="protein sequence ID" value="AAH00267.1"/>
    <property type="status" value="ALT_INIT"/>
    <property type="molecule type" value="mRNA"/>
</dbReference>
<dbReference type="EMBL" id="BC070132">
    <property type="protein sequence ID" value="AAH70132.1"/>
    <property type="status" value="ALT_SEQ"/>
    <property type="molecule type" value="mRNA"/>
</dbReference>
<dbReference type="EMBL" id="BC113004">
    <property type="protein sequence ID" value="AAI13005.1"/>
    <property type="molecule type" value="mRNA"/>
</dbReference>
<dbReference type="EMBL" id="AK024807">
    <property type="protein sequence ID" value="BAB15013.1"/>
    <property type="status" value="ALT_FRAME"/>
    <property type="molecule type" value="mRNA"/>
</dbReference>
<dbReference type="CCDS" id="CCDS34162.1">
    <molecule id="Q86WP2-1"/>
</dbReference>
<dbReference type="CCDS" id="CCDS47211.1">
    <molecule id="Q86WP2-2"/>
</dbReference>
<dbReference type="CCDS" id="CCDS47212.2">
    <molecule id="Q86WP2-3"/>
</dbReference>
<dbReference type="CCDS" id="CCDS56368.1">
    <molecule id="Q86WP2-4"/>
</dbReference>
<dbReference type="PIR" id="T47146">
    <property type="entry name" value="T47146"/>
</dbReference>
<dbReference type="RefSeq" id="NP_001120707.2">
    <molecule id="Q86WP2-3"/>
    <property type="nucleotide sequence ID" value="NM_001127235.2"/>
</dbReference>
<dbReference type="RefSeq" id="NP_001120708.1">
    <molecule id="Q86WP2-2"/>
    <property type="nucleotide sequence ID" value="NM_001127236.2"/>
</dbReference>
<dbReference type="RefSeq" id="NP_001190175.1">
    <molecule id="Q86WP2-4"/>
    <property type="nucleotide sequence ID" value="NM_001203246.2"/>
</dbReference>
<dbReference type="RefSeq" id="NP_075064.1">
    <molecule id="Q86WP2-1"/>
    <property type="nucleotide sequence ID" value="NM_022913.4"/>
</dbReference>
<dbReference type="RefSeq" id="XP_016865245.1">
    <property type="nucleotide sequence ID" value="XM_017009756.1"/>
</dbReference>
<dbReference type="RefSeq" id="XP_016865246.1">
    <property type="nucleotide sequence ID" value="XM_017009757.1"/>
</dbReference>
<dbReference type="RefSeq" id="XP_016865247.1">
    <property type="nucleotide sequence ID" value="XM_017009758.1"/>
</dbReference>
<dbReference type="RefSeq" id="XP_016865248.1">
    <property type="nucleotide sequence ID" value="XM_017009759.1"/>
</dbReference>
<dbReference type="SMR" id="Q86WP2"/>
<dbReference type="BioGRID" id="122378">
    <property type="interactions" value="89"/>
</dbReference>
<dbReference type="FunCoup" id="Q86WP2">
    <property type="interactions" value="4155"/>
</dbReference>
<dbReference type="IntAct" id="Q86WP2">
    <property type="interactions" value="56"/>
</dbReference>
<dbReference type="MINT" id="Q86WP2"/>
<dbReference type="STRING" id="9606.ENSP00000401596"/>
<dbReference type="GlyGen" id="Q86WP2">
    <property type="glycosylation" value="3 sites, 2 N-linked glycans (3 sites)"/>
</dbReference>
<dbReference type="iPTMnet" id="Q86WP2"/>
<dbReference type="PhosphoSitePlus" id="Q86WP2"/>
<dbReference type="BioMuta" id="GPBP1"/>
<dbReference type="DMDM" id="74714120"/>
<dbReference type="jPOST" id="Q86WP2"/>
<dbReference type="MassIVE" id="Q86WP2"/>
<dbReference type="PaxDb" id="9606-ENSP00000264779"/>
<dbReference type="PeptideAtlas" id="Q86WP2"/>
<dbReference type="ProteomicsDB" id="70185">
    <molecule id="Q86WP2-1"/>
</dbReference>
<dbReference type="ProteomicsDB" id="70186">
    <molecule id="Q86WP2-2"/>
</dbReference>
<dbReference type="ProteomicsDB" id="70187">
    <molecule id="Q86WP2-3"/>
</dbReference>
<dbReference type="ProteomicsDB" id="70188">
    <molecule id="Q86WP2-4"/>
</dbReference>
<dbReference type="Pumba" id="Q86WP2"/>
<dbReference type="Antibodypedia" id="11328">
    <property type="antibodies" value="84 antibodies from 21 providers"/>
</dbReference>
<dbReference type="DNASU" id="65056"/>
<dbReference type="Ensembl" id="ENST00000264779.6">
    <molecule id="Q86WP2-2"/>
    <property type="protein sequence ID" value="ENSP00000264779.6"/>
    <property type="gene ID" value="ENSG00000062194.16"/>
</dbReference>
<dbReference type="Ensembl" id="ENST00000506184.7">
    <molecule id="Q86WP2-1"/>
    <property type="protein sequence ID" value="ENSP00000421202.2"/>
    <property type="gene ID" value="ENSG00000062194.16"/>
</dbReference>
<dbReference type="Ensembl" id="ENST00000511209.5">
    <molecule id="Q86WP2-3"/>
    <property type="protein sequence ID" value="ENSP00000422337.1"/>
    <property type="gene ID" value="ENSG00000062194.16"/>
</dbReference>
<dbReference type="Ensembl" id="ENST00000514387.6">
    <molecule id="Q86WP2-4"/>
    <property type="protein sequence ID" value="ENSP00000421709.2"/>
    <property type="gene ID" value="ENSG00000062194.16"/>
</dbReference>
<dbReference type="GeneID" id="65056"/>
<dbReference type="KEGG" id="hsa:65056"/>
<dbReference type="MANE-Select" id="ENST00000506184.7">
    <property type="protein sequence ID" value="ENSP00000421202.2"/>
    <property type="RefSeq nucleotide sequence ID" value="NM_022913.4"/>
    <property type="RefSeq protein sequence ID" value="NP_075064.1"/>
</dbReference>
<dbReference type="UCSC" id="uc003jrh.5">
    <molecule id="Q86WP2-1"/>
    <property type="organism name" value="human"/>
</dbReference>
<dbReference type="AGR" id="HGNC:29520"/>
<dbReference type="CTD" id="65056"/>
<dbReference type="DisGeNET" id="65056"/>
<dbReference type="GeneCards" id="GPBP1"/>
<dbReference type="HGNC" id="HGNC:29520">
    <property type="gene designation" value="GPBP1"/>
</dbReference>
<dbReference type="HPA" id="ENSG00000062194">
    <property type="expression patterns" value="Low tissue specificity"/>
</dbReference>
<dbReference type="MIM" id="608412">
    <property type="type" value="gene"/>
</dbReference>
<dbReference type="neXtProt" id="NX_Q86WP2"/>
<dbReference type="OpenTargets" id="ENSG00000062194"/>
<dbReference type="PharmGKB" id="PA142671714"/>
<dbReference type="VEuPathDB" id="HostDB:ENSG00000062194"/>
<dbReference type="eggNOG" id="ENOG502QR5W">
    <property type="taxonomic scope" value="Eukaryota"/>
</dbReference>
<dbReference type="GeneTree" id="ENSGT00420000029753"/>
<dbReference type="HOGENOM" id="CLU_045487_0_0_1"/>
<dbReference type="InParanoid" id="Q86WP2"/>
<dbReference type="OMA" id="WREDSEN"/>
<dbReference type="OrthoDB" id="8741226at2759"/>
<dbReference type="PAN-GO" id="Q86WP2">
    <property type="GO annotations" value="2 GO annotations based on evolutionary models"/>
</dbReference>
<dbReference type="PhylomeDB" id="Q86WP2"/>
<dbReference type="TreeFam" id="TF332220"/>
<dbReference type="PathwayCommons" id="Q86WP2"/>
<dbReference type="SignaLink" id="Q86WP2"/>
<dbReference type="BioGRID-ORCS" id="65056">
    <property type="hits" value="24 hits in 1159 CRISPR screens"/>
</dbReference>
<dbReference type="ChiTaRS" id="GPBP1">
    <property type="organism name" value="human"/>
</dbReference>
<dbReference type="GeneWiki" id="GPBP1"/>
<dbReference type="GenomeRNAi" id="65056"/>
<dbReference type="Pharos" id="Q86WP2">
    <property type="development level" value="Tbio"/>
</dbReference>
<dbReference type="PRO" id="PR:Q86WP2"/>
<dbReference type="Proteomes" id="UP000005640">
    <property type="component" value="Chromosome 5"/>
</dbReference>
<dbReference type="RNAct" id="Q86WP2">
    <property type="molecule type" value="protein"/>
</dbReference>
<dbReference type="Bgee" id="ENSG00000062194">
    <property type="expression patterns" value="Expressed in ventricular zone and 191 other cell types or tissues"/>
</dbReference>
<dbReference type="ExpressionAtlas" id="Q86WP2">
    <property type="expression patterns" value="baseline and differential"/>
</dbReference>
<dbReference type="GO" id="GO:0005829">
    <property type="term" value="C:cytosol"/>
    <property type="evidence" value="ECO:0000314"/>
    <property type="project" value="HPA"/>
</dbReference>
<dbReference type="GO" id="GO:0043231">
    <property type="term" value="C:intracellular membrane-bounded organelle"/>
    <property type="evidence" value="ECO:0000314"/>
    <property type="project" value="HPA"/>
</dbReference>
<dbReference type="GO" id="GO:0005634">
    <property type="term" value="C:nucleus"/>
    <property type="evidence" value="ECO:0000318"/>
    <property type="project" value="GO_Central"/>
</dbReference>
<dbReference type="GO" id="GO:0005886">
    <property type="term" value="C:plasma membrane"/>
    <property type="evidence" value="ECO:0000314"/>
    <property type="project" value="HPA"/>
</dbReference>
<dbReference type="GO" id="GO:0003677">
    <property type="term" value="F:DNA binding"/>
    <property type="evidence" value="ECO:0007669"/>
    <property type="project" value="UniProtKB-KW"/>
</dbReference>
<dbReference type="GO" id="GO:0003700">
    <property type="term" value="F:DNA-binding transcription factor activity"/>
    <property type="evidence" value="ECO:0007669"/>
    <property type="project" value="Ensembl"/>
</dbReference>
<dbReference type="GO" id="GO:0003723">
    <property type="term" value="F:RNA binding"/>
    <property type="evidence" value="ECO:0007669"/>
    <property type="project" value="InterPro"/>
</dbReference>
<dbReference type="GO" id="GO:0006351">
    <property type="term" value="P:DNA-templated transcription"/>
    <property type="evidence" value="ECO:0007669"/>
    <property type="project" value="InterPro"/>
</dbReference>
<dbReference type="GO" id="GO:0045944">
    <property type="term" value="P:positive regulation of transcription by RNA polymerase II"/>
    <property type="evidence" value="ECO:0007669"/>
    <property type="project" value="Ensembl"/>
</dbReference>
<dbReference type="GO" id="GO:0006355">
    <property type="term" value="P:regulation of DNA-templated transcription"/>
    <property type="evidence" value="ECO:0000318"/>
    <property type="project" value="GO_Central"/>
</dbReference>
<dbReference type="InterPro" id="IPR028128">
    <property type="entry name" value="Vasculin_fam"/>
</dbReference>
<dbReference type="PANTHER" id="PTHR14339">
    <property type="entry name" value="VASCULIN"/>
    <property type="match status" value="1"/>
</dbReference>
<dbReference type="PANTHER" id="PTHR14339:SF11">
    <property type="entry name" value="VASCULIN"/>
    <property type="match status" value="1"/>
</dbReference>
<dbReference type="Pfam" id="PF15337">
    <property type="entry name" value="Vasculin"/>
    <property type="match status" value="1"/>
</dbReference>
<name>GPBP1_HUMAN</name>